<comment type="function">
    <text evidence="2 3 9 10 11">Subunit of the V0 complex of vacuolar(H+)-ATPase (V-ATPase), a multisubunit enzyme composed of a peripheral complex (V1) that hydrolyzes ATP and a membrane integral complex (V0) that transports protons across cellular membranes. V-ATPase is responsible for the acidification of various organelles, such as lysosomes, endosomes, the trans-Golgi network, and secretory granules, including synaptic vesicles (PubMed:33065002, PubMed:33833240, PubMed:34909687). In certain cell types, can be exported to the plasma membrane, where it is involved in the acidification of the extracellular environment (By similarity). Required for assembly and activity of the vacuolar ATPase (By similarity). Through its action on compartment acidification, plays an essential role in neuronal development in terms of integrity and connectivity of neurons (PubMed:33833240).</text>
</comment>
<comment type="subunit">
    <text evidence="8 9">V-ATPase is a heteromultimeric enzyme made up of two complexes: the ATP-hydrolytic V1 complex and the proton translocation V0 complex (PubMed:33065002). The V1 complex consists of three catalytic AB heterodimers that form a heterohexamer, three peripheral stalks each consisting of EG heterodimers, one central rotor including subunits D and F, and the regulatory subunits C and H (PubMed:33065002). The proton translocation complex V0 consists of the proton transport subunit a, a ring of proteolipid subunits c9c'', rotary subunit d, subunits e and f, and the accessory subunits ATP6AP1/Ac45 and ATP6AP2/PRR (PubMed:33065002). Interacts with SPAAR (PubMed:28024296).</text>
</comment>
<comment type="interaction">
    <interactant intactId="EBI-2891238">
        <id>Q93050</id>
    </interactant>
    <interactant intactId="EBI-8561748">
        <id>P06927</id>
        <label>E5</label>
    </interactant>
    <organismsDiffer>true</organismsDiffer>
    <experiments>3</experiments>
</comment>
<comment type="subcellular location">
    <subcellularLocation>
        <location evidence="1">Cytoplasmic vesicle</location>
        <location evidence="1">Clathrin-coated vesicle membrane</location>
        <topology evidence="5">Multi-pass membrane protein</topology>
    </subcellularLocation>
    <subcellularLocation>
        <location evidence="1">Cytoplasmic vesicle</location>
        <location evidence="1">Secretory vesicle</location>
        <location evidence="1">Synaptic vesicle membrane</location>
        <topology evidence="5">Multi-pass membrane protein</topology>
    </subcellularLocation>
    <subcellularLocation>
        <location evidence="6 7">Melanosome</location>
    </subcellularLocation>
    <text evidence="6 7">Identified by mass spectrometry in melanosome fractions from stage I to stage IV.</text>
</comment>
<comment type="alternative products">
    <event type="alternative splicing"/>
    <isoform>
        <id>Q93050-2</id>
        <name>1</name>
        <name>I</name>
        <sequence type="displayed"/>
    </isoform>
    <isoform>
        <id>Q93050-1</id>
        <name>2</name>
        <name>II</name>
        <sequence type="described" ref="VSP_012814"/>
    </isoform>
    <isoform>
        <id>Q93050-3</id>
        <name>3</name>
        <sequence type="described" ref="VSP_043532 VSP_012814"/>
    </isoform>
</comment>
<comment type="disease" evidence="10 11">
    <disease id="DI-06457">
        <name>Developmental and epileptic encephalopathy 104</name>
        <acronym>DEE104</acronym>
        <description>A form of epileptic encephalopathy, a heterogeneous group of early-onset epilepsies characterized by refractory seizures, neurodevelopmental impairment, and poor prognosis. Development is normal prior to seizure onset, after which cognitive and motor delays become apparent. DEE104 is an autosomal dominant form characterized by onset of developmental delay and drug-resistant focal and generalized tonic-clonic seizures in the first few months of life.</description>
        <dbReference type="MIM" id="619970"/>
    </disease>
    <text>The disease is caused by variants affecting the gene represented in this entry.</text>
</comment>
<comment type="disease" evidence="10 11">
    <disease id="DI-06456">
        <name>Neurodevelopmental disorder with epilepsy and brain atrophy</name>
        <acronym>NEDEBA</acronym>
        <description>An autosomal recessive disorder characterized by global developmental delay, early-onset progressive myoclonus epilepsy and ataxia. Brain imaging shows progressive atrophy.</description>
        <dbReference type="MIM" id="619971"/>
    </disease>
    <text>The disease is caused by variants affecting the gene represented in this entry.</text>
</comment>
<comment type="similarity">
    <text evidence="15">Belongs to the V-ATPase 116 kDa subunit family.</text>
</comment>
<evidence type="ECO:0000250" key="1">
    <source>
        <dbReference type="UniProtKB" id="P25286"/>
    </source>
</evidence>
<evidence type="ECO:0000250" key="2">
    <source>
        <dbReference type="UniProtKB" id="P32563"/>
    </source>
</evidence>
<evidence type="ECO:0000250" key="3">
    <source>
        <dbReference type="UniProtKB" id="Q29466"/>
    </source>
</evidence>
<evidence type="ECO:0000250" key="4">
    <source>
        <dbReference type="UniProtKB" id="Q9Z1G4"/>
    </source>
</evidence>
<evidence type="ECO:0000255" key="5"/>
<evidence type="ECO:0000269" key="6">
    <source>
    </source>
</evidence>
<evidence type="ECO:0000269" key="7">
    <source>
    </source>
</evidence>
<evidence type="ECO:0000269" key="8">
    <source>
    </source>
</evidence>
<evidence type="ECO:0000269" key="9">
    <source>
    </source>
</evidence>
<evidence type="ECO:0000269" key="10">
    <source>
    </source>
</evidence>
<evidence type="ECO:0000269" key="11">
    <source>
    </source>
</evidence>
<evidence type="ECO:0000303" key="12">
    <source>
    </source>
</evidence>
<evidence type="ECO:0000303" key="13">
    <source>
    </source>
</evidence>
<evidence type="ECO:0000303" key="14">
    <source ref="1"/>
</evidence>
<evidence type="ECO:0000305" key="15"/>
<evidence type="ECO:0000312" key="16">
    <source>
        <dbReference type="PDB" id="6WM3"/>
    </source>
</evidence>
<evidence type="ECO:0000312" key="17">
    <source>
        <dbReference type="PDB" id="6WM4"/>
    </source>
</evidence>
<evidence type="ECO:0007744" key="18">
    <source>
        <dbReference type="PDB" id="6WLW"/>
    </source>
</evidence>
<evidence type="ECO:0007744" key="19">
    <source>
        <dbReference type="PDB" id="6WM2"/>
    </source>
</evidence>
<evidence type="ECO:0007744" key="20">
    <source>
        <dbReference type="PDB" id="6WM3"/>
    </source>
</evidence>
<evidence type="ECO:0007744" key="21">
    <source>
        <dbReference type="PDB" id="6WM4"/>
    </source>
</evidence>
<evidence type="ECO:0007744" key="22">
    <source>
    </source>
</evidence>
<evidence type="ECO:0007829" key="23">
    <source>
        <dbReference type="PDB" id="6WLW"/>
    </source>
</evidence>
<evidence type="ECO:0007829" key="24">
    <source>
        <dbReference type="PDB" id="6WM2"/>
    </source>
</evidence>
<evidence type="ECO:0007829" key="25">
    <source>
        <dbReference type="PDB" id="6WM3"/>
    </source>
</evidence>
<sequence length="837" mass="96413">MGELFRSEEMTLAQLFLQSEAAYCCVSELGELGKVQFRDLNPDVNVFQRKFVNEVRRCEEMDRKLRFVEKEIRKANIPIMDTGENPEVPFPRDMIDLEANFEKIENELKEINTNQEALKRNFLELTELKFILRKTQQFFDEMADPDLLEESSSLLEPSEMGRGTPLRLGFVAGVINRERIPTFERMLWRVCRGNVFLRQAEIENPLEDPVTGDYVHKSVFIIFFQGDQLKNRVKKICEGFRASLYPCPETPQERKEMASGVNTRIDDLQMVLNQTEDHRQRVLQAAAKNIRVWFIKVRKMKAIYHTLNLCNIDVTQKCLIAEVWCPVTDLDSIQFALRRGTEHSGSTVPSILNRMQTNQTPPTYNKTNKFTYGFQNIVDAYGIGTYREINPAPYTIITFPFLFAVMFGDFGHGILMTLFAVWMVLRESRILSQKNENEMFSTVFSGRYIILLMGVFSMYTGLIYNDCFSKSLNIFGSSWSVRPMFTYNWTEETLRGNPVLQLNPALPGVFGGPYPFGIDPIWNIATNKLTFLNSFKMKMSVILGIIHMLFGVSLSLFNHIYFKKPLNIYFGFIPEIIFMTSLFGYLVILIFYKWTAYDAHTSENAPSLLIHFINMFLFSYPESGYSMLYSGQKGIQCFLVVVALLCVPWMLLFKPLVLRRQYLRRKHLGTLNFGGIRVGNGPTEEDAEIIQHDQLSTHSEDADEPSEDEVFDFGDTMVHQAIHTIEYCLGCISNTASYLRLWALSLAHAQLSEVLWTMVIHIGLSVKSLAGGLVLFFFFTAFATLTVAILLIMEGLSAFLHALRLHWVEFQNKFYSGTGFKFLPFSFEHIREGKFEE</sequence>
<accession>Q93050</accession>
<accession>B7Z3B7</accession>
<accession>Q8N5G7</accession>
<accession>Q9NSX0</accession>
<feature type="chain" id="PRO_0000119211" description="V-type proton ATPase 116 kDa subunit a 1">
    <location>
        <begin position="1"/>
        <end position="837"/>
    </location>
</feature>
<feature type="topological domain" description="Cytoplasmic" evidence="5">
    <location>
        <begin position="1"/>
        <end position="388"/>
    </location>
</feature>
<feature type="transmembrane region" description="Helical" evidence="5">
    <location>
        <begin position="389"/>
        <end position="407"/>
    </location>
</feature>
<feature type="topological domain" description="Vacuolar" evidence="5">
    <location>
        <begin position="408"/>
        <end position="409"/>
    </location>
</feature>
<feature type="transmembrane region" description="Helical" evidence="5">
    <location>
        <begin position="410"/>
        <end position="426"/>
    </location>
</feature>
<feature type="topological domain" description="Cytoplasmic" evidence="5">
    <location>
        <begin position="427"/>
        <end position="441"/>
    </location>
</feature>
<feature type="transmembrane region" description="Helical" evidence="5">
    <location>
        <begin position="442"/>
        <end position="471"/>
    </location>
</feature>
<feature type="topological domain" description="Vacuolar" evidence="5">
    <location>
        <begin position="472"/>
        <end position="534"/>
    </location>
</feature>
<feature type="transmembrane region" description="Helical" evidence="5">
    <location>
        <begin position="535"/>
        <end position="554"/>
    </location>
</feature>
<feature type="topological domain" description="Cytoplasmic" evidence="5">
    <location>
        <begin position="555"/>
        <end position="572"/>
    </location>
</feature>
<feature type="transmembrane region" description="Helical" evidence="5">
    <location>
        <begin position="573"/>
        <end position="593"/>
    </location>
</feature>
<feature type="topological domain" description="Vacuolar" evidence="5">
    <location>
        <begin position="594"/>
        <end position="638"/>
    </location>
</feature>
<feature type="transmembrane region" description="Helical" evidence="5">
    <location>
        <begin position="639"/>
        <end position="658"/>
    </location>
</feature>
<feature type="topological domain" description="Cytoplasmic" evidence="5">
    <location>
        <begin position="659"/>
        <end position="724"/>
    </location>
</feature>
<feature type="transmembrane region" description="Helical" evidence="5">
    <location>
        <begin position="725"/>
        <end position="749"/>
    </location>
</feature>
<feature type="topological domain" description="Vacuolar" evidence="5">
    <location>
        <begin position="750"/>
        <end position="770"/>
    </location>
</feature>
<feature type="transmembrane region" description="Helical" evidence="5">
    <location>
        <begin position="771"/>
        <end position="809"/>
    </location>
</feature>
<feature type="topological domain" description="Cytoplasmic" evidence="5">
    <location>
        <begin position="810"/>
        <end position="837"/>
    </location>
</feature>
<feature type="modified residue" description="Phosphothreonine" evidence="4">
    <location>
        <position position="250"/>
    </location>
</feature>
<feature type="modified residue" description="Phosphothreonine" evidence="22">
    <location>
        <position position="360"/>
    </location>
</feature>
<feature type="modified residue" description="Phosphotyrosine" evidence="4">
    <location>
        <position position="364"/>
    </location>
</feature>
<feature type="glycosylation site" description="N-linked (GalNAc...) asparagine" evidence="9 16 17">
    <location>
        <position position="488"/>
    </location>
</feature>
<feature type="splice variant" id="VSP_043532" description="In isoform 3." evidence="12">
    <original>E</original>
    <variation>EAELHHQQ</variation>
    <location>
        <position position="141"/>
    </location>
</feature>
<feature type="splice variant" id="VSP_012814" description="In isoform 2 and isoform 3." evidence="12 13 14">
    <location>
        <begin position="705"/>
        <end position="710"/>
    </location>
</feature>
<feature type="sequence variant" id="VAR_087489" description="In DEE104; uncertain significance." evidence="11">
    <original>S</original>
    <variation>P</variation>
    <location>
        <position position="477"/>
    </location>
</feature>
<feature type="sequence variant" id="VAR_087490" description="In NEDEBA; uncertain significance; dbSNP:rs781278654." evidence="11">
    <original>R</original>
    <variation>W</variation>
    <location>
        <position position="495"/>
    </location>
</feature>
<feature type="sequence variant" id="VAR_087491" description="In NEDEBA; impaired acidification of endolysosomal compartments; when tested in transgenic mice, homozygosity leads to body weights lower than in wild-type animals, impaired motor function, defects in the neuronal development and synapse formation and eventually death at about 2 weeks of age." evidence="10">
    <original>A</original>
    <variation>P</variation>
    <location>
        <position position="505"/>
    </location>
</feature>
<feature type="sequence variant" id="VAR_087492" description="In NEDEBA; uncertain significance; impaired acidification of endolysosomal compartments; dbSNP:rs766856192." evidence="10">
    <original>N</original>
    <variation>D</variation>
    <location>
        <position position="527"/>
    </location>
</feature>
<feature type="sequence variant" id="VAR_087493" description="In DEE104; uncertain significance." evidence="11">
    <original>G</original>
    <variation>E</variation>
    <location>
        <position position="551"/>
    </location>
</feature>
<feature type="sequence variant" id="VAR_087494" description="In DEE104; impaired acidification of endolysosomal compartments; when tested in transgenic mice, homozygosity leads to embryonic death at 5 to 6 dpc; dbSNP:rs1567871600." evidence="10 11">
    <original>R</original>
    <variation>Q</variation>
    <location>
        <position position="740"/>
    </location>
</feature>
<feature type="sequence variant" id="VAR_087495" description="In DEE104." evidence="11">
    <original>R</original>
    <variation>H</variation>
    <location>
        <position position="804"/>
    </location>
</feature>
<feature type="sequence conflict" description="In Ref. 1; CAA96077." evidence="15" ref="1">
    <original>QL</original>
    <variation>HV</variation>
    <location>
        <begin position="750"/>
        <end position="751"/>
    </location>
</feature>
<feature type="strand" evidence="24">
    <location>
        <begin position="10"/>
        <end position="18"/>
    </location>
</feature>
<feature type="helix" evidence="24">
    <location>
        <begin position="19"/>
        <end position="32"/>
    </location>
</feature>
<feature type="strand" evidence="25">
    <location>
        <begin position="35"/>
        <end position="37"/>
    </location>
</feature>
<feature type="helix" evidence="24">
    <location>
        <begin position="46"/>
        <end position="49"/>
    </location>
</feature>
<feature type="helix" evidence="24">
    <location>
        <begin position="52"/>
        <end position="74"/>
    </location>
</feature>
<feature type="helix" evidence="25">
    <location>
        <begin position="85"/>
        <end position="87"/>
    </location>
</feature>
<feature type="helix" evidence="24">
    <location>
        <begin position="94"/>
        <end position="132"/>
    </location>
</feature>
<feature type="strand" evidence="24">
    <location>
        <begin position="177"/>
        <end position="179"/>
    </location>
</feature>
<feature type="helix" evidence="24">
    <location>
        <begin position="180"/>
        <end position="189"/>
    </location>
</feature>
<feature type="strand" evidence="24">
    <location>
        <begin position="197"/>
        <end position="202"/>
    </location>
</feature>
<feature type="turn" evidence="24">
    <location>
        <begin position="209"/>
        <end position="211"/>
    </location>
</feature>
<feature type="strand" evidence="24">
    <location>
        <begin position="217"/>
        <end position="222"/>
    </location>
</feature>
<feature type="helix" evidence="24">
    <location>
        <begin position="227"/>
        <end position="239"/>
    </location>
</feature>
<feature type="helix" evidence="24">
    <location>
        <begin position="253"/>
        <end position="308"/>
    </location>
</feature>
<feature type="strand" evidence="24">
    <location>
        <begin position="309"/>
        <end position="312"/>
    </location>
</feature>
<feature type="strand" evidence="24">
    <location>
        <begin position="314"/>
        <end position="326"/>
    </location>
</feature>
<feature type="helix" evidence="24">
    <location>
        <begin position="327"/>
        <end position="329"/>
    </location>
</feature>
<feature type="helix" evidence="24">
    <location>
        <begin position="330"/>
        <end position="343"/>
    </location>
</feature>
<feature type="strand" evidence="24">
    <location>
        <begin position="352"/>
        <end position="355"/>
    </location>
</feature>
<feature type="helix" evidence="23">
    <location>
        <begin position="372"/>
        <end position="378"/>
    </location>
</feature>
<feature type="turn" evidence="23">
    <location>
        <begin position="379"/>
        <end position="381"/>
    </location>
</feature>
<feature type="helix" evidence="23">
    <location>
        <begin position="392"/>
        <end position="405"/>
    </location>
</feature>
<feature type="helix" evidence="23">
    <location>
        <begin position="410"/>
        <end position="425"/>
    </location>
</feature>
<feature type="helix" evidence="23">
    <location>
        <begin position="427"/>
        <end position="431"/>
    </location>
</feature>
<feature type="helix" evidence="23">
    <location>
        <begin position="438"/>
        <end position="445"/>
    </location>
</feature>
<feature type="helix" evidence="23">
    <location>
        <begin position="447"/>
        <end position="464"/>
    </location>
</feature>
<feature type="helix" evidence="23">
    <location>
        <begin position="484"/>
        <end position="487"/>
    </location>
</feature>
<feature type="helix" evidence="23">
    <location>
        <begin position="491"/>
        <end position="496"/>
    </location>
</feature>
<feature type="strand" evidence="23">
    <location>
        <begin position="498"/>
        <end position="501"/>
    </location>
</feature>
<feature type="strand" evidence="23">
    <location>
        <begin position="515"/>
        <end position="518"/>
    </location>
</feature>
<feature type="helix" evidence="23">
    <location>
        <begin position="520"/>
        <end position="523"/>
    </location>
</feature>
<feature type="helix" evidence="23">
    <location>
        <begin position="528"/>
        <end position="553"/>
    </location>
</feature>
<feature type="helix" evidence="23">
    <location>
        <begin position="556"/>
        <end position="561"/>
    </location>
</feature>
<feature type="helix" evidence="23">
    <location>
        <begin position="565"/>
        <end position="567"/>
    </location>
</feature>
<feature type="turn" evidence="23">
    <location>
        <begin position="568"/>
        <end position="571"/>
    </location>
</feature>
<feature type="helix" evidence="23">
    <location>
        <begin position="572"/>
        <end position="582"/>
    </location>
</feature>
<feature type="helix" evidence="23">
    <location>
        <begin position="584"/>
        <end position="596"/>
    </location>
</feature>
<feature type="helix" evidence="25">
    <location>
        <begin position="602"/>
        <end position="604"/>
    </location>
</feature>
<feature type="helix" evidence="23">
    <location>
        <begin position="608"/>
        <end position="616"/>
    </location>
</feature>
<feature type="strand" evidence="23">
    <location>
        <begin position="622"/>
        <end position="624"/>
    </location>
</feature>
<feature type="helix" evidence="23">
    <location>
        <begin position="632"/>
        <end position="649"/>
    </location>
</feature>
<feature type="helix" evidence="23">
    <location>
        <begin position="653"/>
        <end position="665"/>
    </location>
</feature>
<feature type="helix" evidence="23">
    <location>
        <begin position="713"/>
        <end position="736"/>
    </location>
</feature>
<feature type="helix" evidence="23">
    <location>
        <begin position="737"/>
        <end position="739"/>
    </location>
</feature>
<feature type="helix" evidence="23">
    <location>
        <begin position="740"/>
        <end position="757"/>
    </location>
</feature>
<feature type="strand" evidence="23">
    <location>
        <begin position="758"/>
        <end position="761"/>
    </location>
</feature>
<feature type="helix" evidence="23">
    <location>
        <begin position="768"/>
        <end position="789"/>
    </location>
</feature>
<feature type="turn" evidence="23">
    <location>
        <begin position="790"/>
        <end position="792"/>
    </location>
</feature>
<feature type="helix" evidence="23">
    <location>
        <begin position="793"/>
        <end position="807"/>
    </location>
</feature>
<feature type="turn" evidence="23">
    <location>
        <begin position="808"/>
        <end position="810"/>
    </location>
</feature>
<feature type="helix" evidence="23">
    <location>
        <begin position="811"/>
        <end position="813"/>
    </location>
</feature>
<organism>
    <name type="scientific">Homo sapiens</name>
    <name type="common">Human</name>
    <dbReference type="NCBI Taxonomy" id="9606"/>
    <lineage>
        <taxon>Eukaryota</taxon>
        <taxon>Metazoa</taxon>
        <taxon>Chordata</taxon>
        <taxon>Craniata</taxon>
        <taxon>Vertebrata</taxon>
        <taxon>Euteleostomi</taxon>
        <taxon>Mammalia</taxon>
        <taxon>Eutheria</taxon>
        <taxon>Euarchontoglires</taxon>
        <taxon>Primates</taxon>
        <taxon>Haplorrhini</taxon>
        <taxon>Catarrhini</taxon>
        <taxon>Hominidae</taxon>
        <taxon>Homo</taxon>
    </lineage>
</organism>
<keyword id="KW-0002">3D-structure</keyword>
<keyword id="KW-0025">Alternative splicing</keyword>
<keyword id="KW-0968">Cytoplasmic vesicle</keyword>
<keyword id="KW-0225">Disease variant</keyword>
<keyword id="KW-0887">Epilepsy</keyword>
<keyword id="KW-0325">Glycoprotein</keyword>
<keyword id="KW-0375">Hydrogen ion transport</keyword>
<keyword id="KW-0991">Intellectual disability</keyword>
<keyword id="KW-0406">Ion transport</keyword>
<keyword id="KW-0472">Membrane</keyword>
<keyword id="KW-0597">Phosphoprotein</keyword>
<keyword id="KW-1267">Proteomics identification</keyword>
<keyword id="KW-1185">Reference proteome</keyword>
<keyword id="KW-0770">Synapse</keyword>
<keyword id="KW-0812">Transmembrane</keyword>
<keyword id="KW-1133">Transmembrane helix</keyword>
<keyword id="KW-0813">Transport</keyword>
<proteinExistence type="evidence at protein level"/>
<dbReference type="EMBL" id="Z71460">
    <property type="protein sequence ID" value="CAA96077.1"/>
    <property type="molecule type" value="mRNA"/>
</dbReference>
<dbReference type="EMBL" id="AK295682">
    <property type="protein sequence ID" value="BAH12153.1"/>
    <property type="molecule type" value="mRNA"/>
</dbReference>
<dbReference type="EMBL" id="AK316305">
    <property type="protein sequence ID" value="BAH14676.1"/>
    <property type="molecule type" value="mRNA"/>
</dbReference>
<dbReference type="EMBL" id="AC067852">
    <property type="status" value="NOT_ANNOTATED_CDS"/>
    <property type="molecule type" value="Genomic_DNA"/>
</dbReference>
<dbReference type="EMBL" id="AC107993">
    <property type="status" value="NOT_ANNOTATED_CDS"/>
    <property type="molecule type" value="Genomic_DNA"/>
</dbReference>
<dbReference type="EMBL" id="CH471152">
    <property type="protein sequence ID" value="EAW60830.1"/>
    <property type="molecule type" value="Genomic_DNA"/>
</dbReference>
<dbReference type="EMBL" id="BC032398">
    <property type="protein sequence ID" value="AAH32398.1"/>
    <property type="molecule type" value="mRNA"/>
</dbReference>
<dbReference type="EMBL" id="AL137683">
    <property type="protein sequence ID" value="CAB70874.1"/>
    <property type="molecule type" value="mRNA"/>
</dbReference>
<dbReference type="CCDS" id="CCDS11426.1">
    <molecule id="Q93050-1"/>
</dbReference>
<dbReference type="CCDS" id="CCDS45683.1">
    <molecule id="Q93050-3"/>
</dbReference>
<dbReference type="CCDS" id="CCDS45684.1">
    <molecule id="Q93050-2"/>
</dbReference>
<dbReference type="PIR" id="T46449">
    <property type="entry name" value="T46449"/>
</dbReference>
<dbReference type="RefSeq" id="NP_001123492.1">
    <molecule id="Q93050-3"/>
    <property type="nucleotide sequence ID" value="NM_001130020.3"/>
</dbReference>
<dbReference type="RefSeq" id="NP_001123493.1">
    <molecule id="Q93050-2"/>
    <property type="nucleotide sequence ID" value="NM_001130021.3"/>
</dbReference>
<dbReference type="RefSeq" id="NP_005168.2">
    <molecule id="Q93050-1"/>
    <property type="nucleotide sequence ID" value="NM_005177.3"/>
</dbReference>
<dbReference type="PDB" id="6WLW">
    <property type="method" value="EM"/>
    <property type="resolution" value="3.00 A"/>
    <property type="chains" value="R=1-837"/>
</dbReference>
<dbReference type="PDB" id="6WM2">
    <property type="method" value="EM"/>
    <property type="resolution" value="3.10 A"/>
    <property type="chains" value="R=1-837"/>
</dbReference>
<dbReference type="PDB" id="6WM3">
    <property type="method" value="EM"/>
    <property type="resolution" value="3.40 A"/>
    <property type="chains" value="R=1-837"/>
</dbReference>
<dbReference type="PDB" id="6WM4">
    <property type="method" value="EM"/>
    <property type="resolution" value="3.60 A"/>
    <property type="chains" value="R=1-837"/>
</dbReference>
<dbReference type="PDB" id="7U4T">
    <property type="method" value="EM"/>
    <property type="resolution" value="3.60 A"/>
    <property type="chains" value="R=1-837"/>
</dbReference>
<dbReference type="PDBsum" id="6WLW"/>
<dbReference type="PDBsum" id="6WM2"/>
<dbReference type="PDBsum" id="6WM3"/>
<dbReference type="PDBsum" id="6WM4"/>
<dbReference type="PDBsum" id="7U4T"/>
<dbReference type="EMDB" id="EMD-21844"/>
<dbReference type="EMDB" id="EMD-21847"/>
<dbReference type="EMDB" id="EMD-21848"/>
<dbReference type="EMDB" id="EMD-21849"/>
<dbReference type="EMDB" id="EMD-26334"/>
<dbReference type="SMR" id="Q93050"/>
<dbReference type="BioGRID" id="107018">
    <property type="interactions" value="226"/>
</dbReference>
<dbReference type="ComplexPortal" id="CPX-2470">
    <property type="entry name" value="Vacuolar proton translocating ATPase complex, ATP6V0A1 variant"/>
</dbReference>
<dbReference type="FunCoup" id="Q93050">
    <property type="interactions" value="3258"/>
</dbReference>
<dbReference type="IntAct" id="Q93050">
    <property type="interactions" value="131"/>
</dbReference>
<dbReference type="MINT" id="Q93050"/>
<dbReference type="STRING" id="9606.ENSP00000264649"/>
<dbReference type="DrugBank" id="DB01133">
    <property type="generic name" value="Tiludronic acid"/>
</dbReference>
<dbReference type="TCDB" id="3.A.2.2.4">
    <property type="family name" value="the h+- or na+-translocating f-type, v-type and a-type atpase (f-atpase) superfamily"/>
</dbReference>
<dbReference type="GlyCosmos" id="Q93050">
    <property type="glycosylation" value="1 site, No reported glycans"/>
</dbReference>
<dbReference type="GlyGen" id="Q93050">
    <property type="glycosylation" value="3 sites, 3 N-linked glycans (1 site), 1 O-linked glycan (1 site)"/>
</dbReference>
<dbReference type="iPTMnet" id="Q93050"/>
<dbReference type="MetOSite" id="Q93050"/>
<dbReference type="PhosphoSitePlus" id="Q93050"/>
<dbReference type="SwissPalm" id="Q93050"/>
<dbReference type="BioMuta" id="ATP6V0A1"/>
<dbReference type="DMDM" id="59803038"/>
<dbReference type="jPOST" id="Q93050"/>
<dbReference type="MassIVE" id="Q93050"/>
<dbReference type="PaxDb" id="9606-ENSP00000264649"/>
<dbReference type="PeptideAtlas" id="Q93050"/>
<dbReference type="ProteomicsDB" id="75687">
    <molecule id="Q93050-2"/>
</dbReference>
<dbReference type="ProteomicsDB" id="75688">
    <molecule id="Q93050-1"/>
</dbReference>
<dbReference type="ProteomicsDB" id="75689">
    <molecule id="Q93050-3"/>
</dbReference>
<dbReference type="Pumba" id="Q93050"/>
<dbReference type="Antibodypedia" id="16938">
    <property type="antibodies" value="99 antibodies from 21 providers"/>
</dbReference>
<dbReference type="DNASU" id="535"/>
<dbReference type="Ensembl" id="ENST00000264649.10">
    <molecule id="Q93050-3"/>
    <property type="protein sequence ID" value="ENSP00000264649.5"/>
    <property type="gene ID" value="ENSG00000033627.18"/>
</dbReference>
<dbReference type="Ensembl" id="ENST00000343619.9">
    <molecule id="Q93050-2"/>
    <property type="protein sequence ID" value="ENSP00000342951.3"/>
    <property type="gene ID" value="ENSG00000033627.18"/>
</dbReference>
<dbReference type="Ensembl" id="ENST00000393829.6">
    <molecule id="Q93050-1"/>
    <property type="protein sequence ID" value="ENSP00000377415.2"/>
    <property type="gene ID" value="ENSG00000033627.18"/>
</dbReference>
<dbReference type="Ensembl" id="ENST00000703901.1">
    <molecule id="Q93050-2"/>
    <property type="protein sequence ID" value="ENSP00000515539.1"/>
    <property type="gene ID" value="ENSG00000033627.18"/>
</dbReference>
<dbReference type="GeneID" id="535"/>
<dbReference type="KEGG" id="hsa:535"/>
<dbReference type="MANE-Select" id="ENST00000343619.9">
    <property type="protein sequence ID" value="ENSP00000342951.3"/>
    <property type="RefSeq nucleotide sequence ID" value="NM_001130021.3"/>
    <property type="RefSeq protein sequence ID" value="NP_001123493.1"/>
</dbReference>
<dbReference type="UCSC" id="uc002hzq.4">
    <molecule id="Q93050-2"/>
    <property type="organism name" value="human"/>
</dbReference>
<dbReference type="AGR" id="HGNC:865"/>
<dbReference type="CTD" id="535"/>
<dbReference type="DisGeNET" id="535"/>
<dbReference type="GeneCards" id="ATP6V0A1"/>
<dbReference type="HGNC" id="HGNC:865">
    <property type="gene designation" value="ATP6V0A1"/>
</dbReference>
<dbReference type="HPA" id="ENSG00000033627">
    <property type="expression patterns" value="Tissue enhanced (brain)"/>
</dbReference>
<dbReference type="MalaCards" id="ATP6V0A1"/>
<dbReference type="MIM" id="192130">
    <property type="type" value="gene"/>
</dbReference>
<dbReference type="MIM" id="619970">
    <property type="type" value="phenotype"/>
</dbReference>
<dbReference type="MIM" id="619971">
    <property type="type" value="phenotype"/>
</dbReference>
<dbReference type="neXtProt" id="NX_Q93050"/>
<dbReference type="OpenTargets" id="ENSG00000033627"/>
<dbReference type="Orphanet" id="528084">
    <property type="disease" value="Non-specific syndromic intellectual disability"/>
</dbReference>
<dbReference type="PharmGKB" id="PA25146"/>
<dbReference type="VEuPathDB" id="HostDB:ENSG00000033627"/>
<dbReference type="eggNOG" id="KOG2189">
    <property type="taxonomic scope" value="Eukaryota"/>
</dbReference>
<dbReference type="GeneTree" id="ENSGT00950000182881"/>
<dbReference type="HOGENOM" id="CLU_005230_0_1_1"/>
<dbReference type="InParanoid" id="Q93050"/>
<dbReference type="OMA" id="FYLWFFL"/>
<dbReference type="OrthoDB" id="10264220at2759"/>
<dbReference type="PAN-GO" id="Q93050">
    <property type="GO annotations" value="4 GO annotations based on evolutionary models"/>
</dbReference>
<dbReference type="PhylomeDB" id="Q93050"/>
<dbReference type="TreeFam" id="TF300346"/>
<dbReference type="BioCyc" id="MetaCyc:ENSG00000033627-MONOMER"/>
<dbReference type="PathwayCommons" id="Q93050"/>
<dbReference type="Reactome" id="R-HSA-1222556">
    <property type="pathway name" value="ROS and RNS production in phagocytes"/>
</dbReference>
<dbReference type="Reactome" id="R-HSA-6798695">
    <property type="pathway name" value="Neutrophil degranulation"/>
</dbReference>
<dbReference type="Reactome" id="R-HSA-77387">
    <property type="pathway name" value="Insulin receptor recycling"/>
</dbReference>
<dbReference type="Reactome" id="R-HSA-917977">
    <property type="pathway name" value="Transferrin endocytosis and recycling"/>
</dbReference>
<dbReference type="Reactome" id="R-HSA-983712">
    <property type="pathway name" value="Ion channel transport"/>
</dbReference>
<dbReference type="SignaLink" id="Q93050"/>
<dbReference type="BioGRID-ORCS" id="535">
    <property type="hits" value="28 hits in 1165 CRISPR screens"/>
</dbReference>
<dbReference type="CD-CODE" id="FB4E32DD">
    <property type="entry name" value="Presynaptic clusters and postsynaptic densities"/>
</dbReference>
<dbReference type="ChiTaRS" id="ATP6V0A1">
    <property type="organism name" value="human"/>
</dbReference>
<dbReference type="GeneWiki" id="ATPase,_H%2B_transporting,_lysosomal_V0_subunit_a1"/>
<dbReference type="GenomeRNAi" id="535"/>
<dbReference type="Pharos" id="Q93050">
    <property type="development level" value="Tbio"/>
</dbReference>
<dbReference type="PRO" id="PR:Q93050"/>
<dbReference type="Proteomes" id="UP000005640">
    <property type="component" value="Chromosome 17"/>
</dbReference>
<dbReference type="RNAct" id="Q93050">
    <property type="molecule type" value="protein"/>
</dbReference>
<dbReference type="Bgee" id="ENSG00000033627">
    <property type="expression patterns" value="Expressed in right frontal lobe and 201 other cell types or tissues"/>
</dbReference>
<dbReference type="ExpressionAtlas" id="Q93050">
    <property type="expression patterns" value="baseline and differential"/>
</dbReference>
<dbReference type="GO" id="GO:0030665">
    <property type="term" value="C:clathrin-coated vesicle membrane"/>
    <property type="evidence" value="ECO:0007669"/>
    <property type="project" value="UniProtKB-SubCell"/>
</dbReference>
<dbReference type="GO" id="GO:0005829">
    <property type="term" value="C:cytosol"/>
    <property type="evidence" value="ECO:0000314"/>
    <property type="project" value="HPA"/>
</dbReference>
<dbReference type="GO" id="GO:0010008">
    <property type="term" value="C:endosome membrane"/>
    <property type="evidence" value="ECO:0000304"/>
    <property type="project" value="Reactome"/>
</dbReference>
<dbReference type="GO" id="GO:0070062">
    <property type="term" value="C:extracellular exosome"/>
    <property type="evidence" value="ECO:0007005"/>
    <property type="project" value="UniProtKB"/>
</dbReference>
<dbReference type="GO" id="GO:0101003">
    <property type="term" value="C:ficolin-1-rich granule membrane"/>
    <property type="evidence" value="ECO:0000304"/>
    <property type="project" value="Reactome"/>
</dbReference>
<dbReference type="GO" id="GO:0005794">
    <property type="term" value="C:Golgi apparatus"/>
    <property type="evidence" value="ECO:0000314"/>
    <property type="project" value="HPA"/>
</dbReference>
<dbReference type="GO" id="GO:0043231">
    <property type="term" value="C:intracellular membrane-bounded organelle"/>
    <property type="evidence" value="ECO:0000314"/>
    <property type="project" value="HPA"/>
</dbReference>
<dbReference type="GO" id="GO:0005765">
    <property type="term" value="C:lysosomal membrane"/>
    <property type="evidence" value="ECO:0000304"/>
    <property type="project" value="ParkinsonsUK-UCL"/>
</dbReference>
<dbReference type="GO" id="GO:0042470">
    <property type="term" value="C:melanosome"/>
    <property type="evidence" value="ECO:0007669"/>
    <property type="project" value="UniProtKB-SubCell"/>
</dbReference>
<dbReference type="GO" id="GO:0016020">
    <property type="term" value="C:membrane"/>
    <property type="evidence" value="ECO:0000314"/>
    <property type="project" value="ComplexPortal"/>
</dbReference>
<dbReference type="GO" id="GO:0016607">
    <property type="term" value="C:nuclear speck"/>
    <property type="evidence" value="ECO:0000314"/>
    <property type="project" value="HPA"/>
</dbReference>
<dbReference type="GO" id="GO:0048471">
    <property type="term" value="C:perinuclear region of cytoplasm"/>
    <property type="evidence" value="ECO:0007669"/>
    <property type="project" value="Ensembl"/>
</dbReference>
<dbReference type="GO" id="GO:0030670">
    <property type="term" value="C:phagocytic vesicle membrane"/>
    <property type="evidence" value="ECO:0000304"/>
    <property type="project" value="Reactome"/>
</dbReference>
<dbReference type="GO" id="GO:0005886">
    <property type="term" value="C:plasma membrane"/>
    <property type="evidence" value="ECO:0000314"/>
    <property type="project" value="UniProtKB"/>
</dbReference>
<dbReference type="GO" id="GO:0033176">
    <property type="term" value="C:proton-transporting V-type ATPase complex"/>
    <property type="evidence" value="ECO:0000303"/>
    <property type="project" value="ComplexPortal"/>
</dbReference>
<dbReference type="GO" id="GO:0030667">
    <property type="term" value="C:secretory granule membrane"/>
    <property type="evidence" value="ECO:0000304"/>
    <property type="project" value="Reactome"/>
</dbReference>
<dbReference type="GO" id="GO:0030672">
    <property type="term" value="C:synaptic vesicle membrane"/>
    <property type="evidence" value="ECO:0007669"/>
    <property type="project" value="UniProtKB-SubCell"/>
</dbReference>
<dbReference type="GO" id="GO:0016471">
    <property type="term" value="C:vacuolar proton-transporting V-type ATPase complex"/>
    <property type="evidence" value="ECO:0000318"/>
    <property type="project" value="GO_Central"/>
</dbReference>
<dbReference type="GO" id="GO:0000220">
    <property type="term" value="C:vacuolar proton-transporting V-type ATPase, V0 domain"/>
    <property type="evidence" value="ECO:0000250"/>
    <property type="project" value="UniProtKB"/>
</dbReference>
<dbReference type="GO" id="GO:0051117">
    <property type="term" value="F:ATPase binding"/>
    <property type="evidence" value="ECO:0000353"/>
    <property type="project" value="UniProtKB"/>
</dbReference>
<dbReference type="GO" id="GO:0046961">
    <property type="term" value="F:proton-transporting ATPase activity, rotational mechanism"/>
    <property type="evidence" value="ECO:0007669"/>
    <property type="project" value="InterPro"/>
</dbReference>
<dbReference type="GO" id="GO:0048388">
    <property type="term" value="P:endosomal lumen acidification"/>
    <property type="evidence" value="ECO:0000303"/>
    <property type="project" value="ComplexPortal"/>
</dbReference>
<dbReference type="GO" id="GO:0007042">
    <property type="term" value="P:lysosomal lumen acidification"/>
    <property type="evidence" value="ECO:0000303"/>
    <property type="project" value="ComplexPortal"/>
</dbReference>
<dbReference type="GO" id="GO:1902600">
    <property type="term" value="P:proton transmembrane transport"/>
    <property type="evidence" value="ECO:0000303"/>
    <property type="project" value="ComplexPortal"/>
</dbReference>
<dbReference type="GO" id="GO:0016241">
    <property type="term" value="P:regulation of macroautophagy"/>
    <property type="evidence" value="ECO:0000315"/>
    <property type="project" value="ParkinsonsUK-UCL"/>
</dbReference>
<dbReference type="GO" id="GO:0097401">
    <property type="term" value="P:synaptic vesicle lumen acidification"/>
    <property type="evidence" value="ECO:0007669"/>
    <property type="project" value="Ensembl"/>
</dbReference>
<dbReference type="GO" id="GO:0007035">
    <property type="term" value="P:vacuolar acidification"/>
    <property type="evidence" value="ECO:0000318"/>
    <property type="project" value="GO_Central"/>
</dbReference>
<dbReference type="InterPro" id="IPR002490">
    <property type="entry name" value="V-ATPase_116kDa_su"/>
</dbReference>
<dbReference type="InterPro" id="IPR026028">
    <property type="entry name" value="V-type_ATPase_116kDa_su_euka"/>
</dbReference>
<dbReference type="PANTHER" id="PTHR11629:SF68">
    <property type="entry name" value="V-TYPE PROTON ATPASE 116 KDA SUBUNIT A 1"/>
    <property type="match status" value="1"/>
</dbReference>
<dbReference type="PANTHER" id="PTHR11629">
    <property type="entry name" value="VACUOLAR PROTON ATPASES"/>
    <property type="match status" value="1"/>
</dbReference>
<dbReference type="Pfam" id="PF01496">
    <property type="entry name" value="V_ATPase_I"/>
    <property type="match status" value="1"/>
</dbReference>
<dbReference type="PIRSF" id="PIRSF001293">
    <property type="entry name" value="ATP6V0A1"/>
    <property type="match status" value="1"/>
</dbReference>
<gene>
    <name type="primary">ATP6V0A1</name>
    <name type="synonym">ATP6N1</name>
    <name type="synonym">ATP6N1A</name>
    <name type="synonym">VPP1</name>
</gene>
<reference key="1">
    <citation type="submission" date="1996-11" db="EMBL/GenBank/DDBJ databases">
        <title>Sequence and alternative splicing in human 115 kDa subunit of vacuolar-type H(+)-ATPase.</title>
        <authorList>
            <person name="Fehr C.N."/>
            <person name="Gillies R.J."/>
            <person name="Wang H.-Y."/>
            <person name="Ullrich A."/>
        </authorList>
    </citation>
    <scope>NUCLEOTIDE SEQUENCE [MRNA] (ISOFORM 2)</scope>
    <source>
        <tissue>Pancreas</tissue>
    </source>
</reference>
<reference key="2">
    <citation type="journal article" date="2004" name="Nat. Genet.">
        <title>Complete sequencing and characterization of 21,243 full-length human cDNAs.</title>
        <authorList>
            <person name="Ota T."/>
            <person name="Suzuki Y."/>
            <person name="Nishikawa T."/>
            <person name="Otsuki T."/>
            <person name="Sugiyama T."/>
            <person name="Irie R."/>
            <person name="Wakamatsu A."/>
            <person name="Hayashi K."/>
            <person name="Sato H."/>
            <person name="Nagai K."/>
            <person name="Kimura K."/>
            <person name="Makita H."/>
            <person name="Sekine M."/>
            <person name="Obayashi M."/>
            <person name="Nishi T."/>
            <person name="Shibahara T."/>
            <person name="Tanaka T."/>
            <person name="Ishii S."/>
            <person name="Yamamoto J."/>
            <person name="Saito K."/>
            <person name="Kawai Y."/>
            <person name="Isono Y."/>
            <person name="Nakamura Y."/>
            <person name="Nagahari K."/>
            <person name="Murakami K."/>
            <person name="Yasuda T."/>
            <person name="Iwayanagi T."/>
            <person name="Wagatsuma M."/>
            <person name="Shiratori A."/>
            <person name="Sudo H."/>
            <person name="Hosoiri T."/>
            <person name="Kaku Y."/>
            <person name="Kodaira H."/>
            <person name="Kondo H."/>
            <person name="Sugawara M."/>
            <person name="Takahashi M."/>
            <person name="Kanda K."/>
            <person name="Yokoi T."/>
            <person name="Furuya T."/>
            <person name="Kikkawa E."/>
            <person name="Omura Y."/>
            <person name="Abe K."/>
            <person name="Kamihara K."/>
            <person name="Katsuta N."/>
            <person name="Sato K."/>
            <person name="Tanikawa M."/>
            <person name="Yamazaki M."/>
            <person name="Ninomiya K."/>
            <person name="Ishibashi T."/>
            <person name="Yamashita H."/>
            <person name="Murakawa K."/>
            <person name="Fujimori K."/>
            <person name="Tanai H."/>
            <person name="Kimata M."/>
            <person name="Watanabe M."/>
            <person name="Hiraoka S."/>
            <person name="Chiba Y."/>
            <person name="Ishida S."/>
            <person name="Ono Y."/>
            <person name="Takiguchi S."/>
            <person name="Watanabe S."/>
            <person name="Yosida M."/>
            <person name="Hotuta T."/>
            <person name="Kusano J."/>
            <person name="Kanehori K."/>
            <person name="Takahashi-Fujii A."/>
            <person name="Hara H."/>
            <person name="Tanase T.-O."/>
            <person name="Nomura Y."/>
            <person name="Togiya S."/>
            <person name="Komai F."/>
            <person name="Hara R."/>
            <person name="Takeuchi K."/>
            <person name="Arita M."/>
            <person name="Imose N."/>
            <person name="Musashino K."/>
            <person name="Yuuki H."/>
            <person name="Oshima A."/>
            <person name="Sasaki N."/>
            <person name="Aotsuka S."/>
            <person name="Yoshikawa Y."/>
            <person name="Matsunawa H."/>
            <person name="Ichihara T."/>
            <person name="Shiohata N."/>
            <person name="Sano S."/>
            <person name="Moriya S."/>
            <person name="Momiyama H."/>
            <person name="Satoh N."/>
            <person name="Takami S."/>
            <person name="Terashima Y."/>
            <person name="Suzuki O."/>
            <person name="Nakagawa S."/>
            <person name="Senoh A."/>
            <person name="Mizoguchi H."/>
            <person name="Goto Y."/>
            <person name="Shimizu F."/>
            <person name="Wakebe H."/>
            <person name="Hishigaki H."/>
            <person name="Watanabe T."/>
            <person name="Sugiyama A."/>
            <person name="Takemoto M."/>
            <person name="Kawakami B."/>
            <person name="Yamazaki M."/>
            <person name="Watanabe K."/>
            <person name="Kumagai A."/>
            <person name="Itakura S."/>
            <person name="Fukuzumi Y."/>
            <person name="Fujimori Y."/>
            <person name="Komiyama M."/>
            <person name="Tashiro H."/>
            <person name="Tanigami A."/>
            <person name="Fujiwara T."/>
            <person name="Ono T."/>
            <person name="Yamada K."/>
            <person name="Fujii Y."/>
            <person name="Ozaki K."/>
            <person name="Hirao M."/>
            <person name="Ohmori Y."/>
            <person name="Kawabata A."/>
            <person name="Hikiji T."/>
            <person name="Kobatake N."/>
            <person name="Inagaki H."/>
            <person name="Ikema Y."/>
            <person name="Okamoto S."/>
            <person name="Okitani R."/>
            <person name="Kawakami T."/>
            <person name="Noguchi S."/>
            <person name="Itoh T."/>
            <person name="Shigeta K."/>
            <person name="Senba T."/>
            <person name="Matsumura K."/>
            <person name="Nakajima Y."/>
            <person name="Mizuno T."/>
            <person name="Morinaga M."/>
            <person name="Sasaki M."/>
            <person name="Togashi T."/>
            <person name="Oyama M."/>
            <person name="Hata H."/>
            <person name="Watanabe M."/>
            <person name="Komatsu T."/>
            <person name="Mizushima-Sugano J."/>
            <person name="Satoh T."/>
            <person name="Shirai Y."/>
            <person name="Takahashi Y."/>
            <person name="Nakagawa K."/>
            <person name="Okumura K."/>
            <person name="Nagase T."/>
            <person name="Nomura N."/>
            <person name="Kikuchi H."/>
            <person name="Masuho Y."/>
            <person name="Yamashita R."/>
            <person name="Nakai K."/>
            <person name="Yada T."/>
            <person name="Nakamura Y."/>
            <person name="Ohara O."/>
            <person name="Isogai T."/>
            <person name="Sugano S."/>
        </authorList>
    </citation>
    <scope>NUCLEOTIDE SEQUENCE [LARGE SCALE MRNA] (ISOFORM 3)</scope>
    <source>
        <tissue>Hippocampus</tissue>
        <tissue>Placenta</tissue>
    </source>
</reference>
<reference key="3">
    <citation type="journal article" date="2006" name="Nature">
        <title>DNA sequence of human chromosome 17 and analysis of rearrangement in the human lineage.</title>
        <authorList>
            <person name="Zody M.C."/>
            <person name="Garber M."/>
            <person name="Adams D.J."/>
            <person name="Sharpe T."/>
            <person name="Harrow J."/>
            <person name="Lupski J.R."/>
            <person name="Nicholson C."/>
            <person name="Searle S.M."/>
            <person name="Wilming L."/>
            <person name="Young S.K."/>
            <person name="Abouelleil A."/>
            <person name="Allen N.R."/>
            <person name="Bi W."/>
            <person name="Bloom T."/>
            <person name="Borowsky M.L."/>
            <person name="Bugalter B.E."/>
            <person name="Butler J."/>
            <person name="Chang J.L."/>
            <person name="Chen C.-K."/>
            <person name="Cook A."/>
            <person name="Corum B."/>
            <person name="Cuomo C.A."/>
            <person name="de Jong P.J."/>
            <person name="DeCaprio D."/>
            <person name="Dewar K."/>
            <person name="FitzGerald M."/>
            <person name="Gilbert J."/>
            <person name="Gibson R."/>
            <person name="Gnerre S."/>
            <person name="Goldstein S."/>
            <person name="Grafham D.V."/>
            <person name="Grocock R."/>
            <person name="Hafez N."/>
            <person name="Hagopian D.S."/>
            <person name="Hart E."/>
            <person name="Norman C.H."/>
            <person name="Humphray S."/>
            <person name="Jaffe D.B."/>
            <person name="Jones M."/>
            <person name="Kamal M."/>
            <person name="Khodiyar V.K."/>
            <person name="LaButti K."/>
            <person name="Laird G."/>
            <person name="Lehoczky J."/>
            <person name="Liu X."/>
            <person name="Lokyitsang T."/>
            <person name="Loveland J."/>
            <person name="Lui A."/>
            <person name="Macdonald P."/>
            <person name="Major J.E."/>
            <person name="Matthews L."/>
            <person name="Mauceli E."/>
            <person name="McCarroll S.A."/>
            <person name="Mihalev A.H."/>
            <person name="Mudge J."/>
            <person name="Nguyen C."/>
            <person name="Nicol R."/>
            <person name="O'Leary S.B."/>
            <person name="Osoegawa K."/>
            <person name="Schwartz D.C."/>
            <person name="Shaw-Smith C."/>
            <person name="Stankiewicz P."/>
            <person name="Steward C."/>
            <person name="Swarbreck D."/>
            <person name="Venkataraman V."/>
            <person name="Whittaker C.A."/>
            <person name="Yang X."/>
            <person name="Zimmer A.R."/>
            <person name="Bradley A."/>
            <person name="Hubbard T."/>
            <person name="Birren B.W."/>
            <person name="Rogers J."/>
            <person name="Lander E.S."/>
            <person name="Nusbaum C."/>
        </authorList>
    </citation>
    <scope>NUCLEOTIDE SEQUENCE [LARGE SCALE GENOMIC DNA]</scope>
</reference>
<reference key="4">
    <citation type="submission" date="2005-07" db="EMBL/GenBank/DDBJ databases">
        <authorList>
            <person name="Mural R.J."/>
            <person name="Istrail S."/>
            <person name="Sutton G."/>
            <person name="Florea L."/>
            <person name="Halpern A.L."/>
            <person name="Mobarry C.M."/>
            <person name="Lippert R."/>
            <person name="Walenz B."/>
            <person name="Shatkay H."/>
            <person name="Dew I."/>
            <person name="Miller J.R."/>
            <person name="Flanigan M.J."/>
            <person name="Edwards N.J."/>
            <person name="Bolanos R."/>
            <person name="Fasulo D."/>
            <person name="Halldorsson B.V."/>
            <person name="Hannenhalli S."/>
            <person name="Turner R."/>
            <person name="Yooseph S."/>
            <person name="Lu F."/>
            <person name="Nusskern D.R."/>
            <person name="Shue B.C."/>
            <person name="Zheng X.H."/>
            <person name="Zhong F."/>
            <person name="Delcher A.L."/>
            <person name="Huson D.H."/>
            <person name="Kravitz S.A."/>
            <person name="Mouchard L."/>
            <person name="Reinert K."/>
            <person name="Remington K.A."/>
            <person name="Clark A.G."/>
            <person name="Waterman M.S."/>
            <person name="Eichler E.E."/>
            <person name="Adams M.D."/>
            <person name="Hunkapiller M.W."/>
            <person name="Myers E.W."/>
            <person name="Venter J.C."/>
        </authorList>
    </citation>
    <scope>NUCLEOTIDE SEQUENCE [LARGE SCALE GENOMIC DNA]</scope>
</reference>
<reference key="5">
    <citation type="journal article" date="2004" name="Genome Res.">
        <title>The status, quality, and expansion of the NIH full-length cDNA project: the Mammalian Gene Collection (MGC).</title>
        <authorList>
            <consortium name="The MGC Project Team"/>
        </authorList>
    </citation>
    <scope>NUCLEOTIDE SEQUENCE [LARGE SCALE MRNA] (ISOFORM 1)</scope>
    <source>
        <tissue>Brain</tissue>
    </source>
</reference>
<reference key="6">
    <citation type="journal article" date="2007" name="BMC Genomics">
        <title>The full-ORF clone resource of the German cDNA consortium.</title>
        <authorList>
            <person name="Bechtel S."/>
            <person name="Rosenfelder H."/>
            <person name="Duda A."/>
            <person name="Schmidt C.P."/>
            <person name="Ernst U."/>
            <person name="Wellenreuther R."/>
            <person name="Mehrle A."/>
            <person name="Schuster C."/>
            <person name="Bahr A."/>
            <person name="Bloecker H."/>
            <person name="Heubner D."/>
            <person name="Hoerlein A."/>
            <person name="Michel G."/>
            <person name="Wedler H."/>
            <person name="Koehrer K."/>
            <person name="Ottenwaelder B."/>
            <person name="Poustka A."/>
            <person name="Wiemann S."/>
            <person name="Schupp I."/>
        </authorList>
    </citation>
    <scope>NUCLEOTIDE SEQUENCE [LARGE SCALE MRNA] OF 675-837 (ISOFORM 2)</scope>
    <source>
        <tissue>Testis</tissue>
    </source>
</reference>
<reference key="7">
    <citation type="journal article" date="2003" name="J. Proteome Res.">
        <title>Proteomic analysis of early melanosomes: identification of novel melanosomal proteins.</title>
        <authorList>
            <person name="Basrur V."/>
            <person name="Yang F."/>
            <person name="Kushimoto T."/>
            <person name="Higashimoto Y."/>
            <person name="Yasumoto K."/>
            <person name="Valencia J."/>
            <person name="Muller J."/>
            <person name="Vieira W.D."/>
            <person name="Watabe H."/>
            <person name="Shabanowitz J."/>
            <person name="Hearing V.J."/>
            <person name="Hunt D.F."/>
            <person name="Appella E."/>
        </authorList>
    </citation>
    <scope>SUBCELLULAR LOCATION [LARGE SCALE ANALYSIS]</scope>
    <source>
        <tissue>Melanoma</tissue>
    </source>
</reference>
<reference key="8">
    <citation type="journal article" date="2006" name="J. Proteome Res.">
        <title>Proteomic and bioinformatic characterization of the biogenesis and function of melanosomes.</title>
        <authorList>
            <person name="Chi A."/>
            <person name="Valencia J.C."/>
            <person name="Hu Z.-Z."/>
            <person name="Watabe H."/>
            <person name="Yamaguchi H."/>
            <person name="Mangini N.J."/>
            <person name="Huang H."/>
            <person name="Canfield V.A."/>
            <person name="Cheng K.C."/>
            <person name="Yang F."/>
            <person name="Abe R."/>
            <person name="Yamagishi S."/>
            <person name="Shabanowitz J."/>
            <person name="Hearing V.J."/>
            <person name="Wu C."/>
            <person name="Appella E."/>
            <person name="Hunt D.F."/>
        </authorList>
    </citation>
    <scope>SUBCELLULAR LOCATION [LARGE SCALE ANALYSIS]</scope>
    <source>
        <tissue>Melanoma</tissue>
    </source>
</reference>
<reference key="9">
    <citation type="journal article" date="2013" name="J. Proteome Res.">
        <title>Toward a comprehensive characterization of a human cancer cell phosphoproteome.</title>
        <authorList>
            <person name="Zhou H."/>
            <person name="Di Palma S."/>
            <person name="Preisinger C."/>
            <person name="Peng M."/>
            <person name="Polat A.N."/>
            <person name="Heck A.J."/>
            <person name="Mohammed S."/>
        </authorList>
    </citation>
    <scope>PHOSPHORYLATION [LARGE SCALE ANALYSIS] AT THR-360</scope>
    <scope>IDENTIFICATION BY MASS SPECTROMETRY [LARGE SCALE ANALYSIS]</scope>
    <source>
        <tissue>Erythroleukemia</tissue>
    </source>
</reference>
<reference key="10">
    <citation type="journal article" date="2014" name="J. Proteomics">
        <title>An enzyme assisted RP-RPLC approach for in-depth analysis of human liver phosphoproteome.</title>
        <authorList>
            <person name="Bian Y."/>
            <person name="Song C."/>
            <person name="Cheng K."/>
            <person name="Dong M."/>
            <person name="Wang F."/>
            <person name="Huang J."/>
            <person name="Sun D."/>
            <person name="Wang L."/>
            <person name="Ye M."/>
            <person name="Zou H."/>
        </authorList>
    </citation>
    <scope>IDENTIFICATION BY MASS SPECTROMETRY [LARGE SCALE ANALYSIS]</scope>
    <source>
        <tissue>Liver</tissue>
    </source>
</reference>
<reference key="11">
    <citation type="journal article" date="2017" name="Nature">
        <title>mTORC1 and muscle regeneration are regulated by the LINC00961-encoded SPAR polypeptide.</title>
        <authorList>
            <person name="Matsumoto A."/>
            <person name="Pasut A."/>
            <person name="Matsumoto M."/>
            <person name="Yamashita R."/>
            <person name="Fung J."/>
            <person name="Monteleone E."/>
            <person name="Saghatelian A."/>
            <person name="Nakayama K.I."/>
            <person name="Clohessy J.G."/>
            <person name="Pandolfi P.P."/>
        </authorList>
    </citation>
    <scope>INTERACTION WITH SPAAR</scope>
</reference>
<reference evidence="18 19 20 21" key="12">
    <citation type="journal article" date="2020" name="Mol. Cell">
        <title>Structures of a Complete Human V-ATPase Reveal Mechanisms of Its Assembly.</title>
        <authorList>
            <person name="Wang L."/>
            <person name="Wu D."/>
            <person name="Robinson C.V."/>
            <person name="Wu H."/>
            <person name="Fu T.M."/>
        </authorList>
    </citation>
    <scope>STRUCTURE BY ELECTRON MICROSCOPY (3.00 ANGSTROMS)</scope>
    <scope>FUNCTION</scope>
    <scope>IDENTIFICATION IN THE V-ATPASE COMPLEX</scope>
    <scope>GLYCOSYLATION AT ASN-488</scope>
</reference>
<reference key="13">
    <citation type="journal article" date="2021" name="Brain Commun.">
        <title>Variants in ATP6V0A1 cause progressive myoclonus epilepsy and developmental and epileptic encephalopathy.</title>
        <authorList>
            <consortium name="ATPase Consortium"/>
            <person name="Bott L.C."/>
            <person name="Forouhan M."/>
            <person name="Lieto M."/>
            <person name="Sala A.J."/>
            <person name="Ellerington R."/>
            <person name="Johnson J.O."/>
            <person name="Speciale A.A."/>
            <person name="Criscuolo C."/>
            <person name="Filla A."/>
            <person name="Chitayat D."/>
            <person name="Alkhunaizi E."/>
            <person name="Shannon P."/>
            <person name="Nemeth A.H."/>
            <person name="Angelucci F."/>
            <person name="Lim W.F."/>
            <person name="Striano P."/>
            <person name="Zara F."/>
            <person name="Helbig I."/>
            <person name="Muona M."/>
            <person name="Courage C."/>
            <person name="Lehesjoki A.E."/>
            <person name="Berkovic S.F."/>
            <person name="Fischbeck K.H."/>
            <person name="Brancati F."/>
            <person name="Morimoto R.I."/>
            <person name="Wood M.J.A."/>
            <person name="Rinaldi C."/>
        </authorList>
    </citation>
    <scope>INVOLVEMENT IN DEE104</scope>
    <scope>VARIANTS DEE104 PRO-477; GLU-551; GLN-740 AND HIS-804</scope>
    <scope>CHARACTERIZATION OF VARIANT DEE104 GLN-740</scope>
    <scope>INVOLVEMENT IN NEDEBA</scope>
    <scope>VARIANT NEDEBA TRP-495</scope>
    <scope>FUNCTION</scope>
</reference>
<reference key="14">
    <citation type="journal article" date="2021" name="Nat. Commun.">
        <title>ATP6V0A1 encoding the a1-subunit of the V0 domain of vacuolar H+-ATPases is essential for brain development in humans and mice.</title>
        <authorList>
            <person name="Aoto K."/>
            <person name="Kato M."/>
            <person name="Akita T."/>
            <person name="Nakashima M."/>
            <person name="Mutoh H."/>
            <person name="Akasaka N."/>
            <person name="Tohyama J."/>
            <person name="Nomura Y."/>
            <person name="Hoshino K."/>
            <person name="Ago Y."/>
            <person name="Tanaka R."/>
            <person name="Epstein O."/>
            <person name="Ben-Haim R."/>
            <person name="Heyman E."/>
            <person name="Miyazaki T."/>
            <person name="Belal H."/>
            <person name="Takabayashi S."/>
            <person name="Ohba C."/>
            <person name="Takata A."/>
            <person name="Mizuguchi T."/>
            <person name="Miyatake S."/>
            <person name="Miyake N."/>
            <person name="Fukuda A."/>
            <person name="Matsumoto N."/>
            <person name="Saitsu H."/>
        </authorList>
    </citation>
    <scope>INVOLVEMENT IN DEE104</scope>
    <scope>VARIANT DEE104 GLN-740</scope>
    <scope>CHARACTERIZATION OF VARIANT DEE104 GLN-740</scope>
    <scope>INVOLVEMENT IN NEDEBA</scope>
    <scope>FUNCTION</scope>
    <scope>VARIANTS NEDEBA PRO-505 AND ASP-527</scope>
    <scope>CHARACTERIZATION OF VARIANTS NEDEBA PRO-505 AND ASP-527</scope>
</reference>
<protein>
    <recommendedName>
        <fullName>V-type proton ATPase 116 kDa subunit a 1</fullName>
        <shortName>V-ATPase 116 kDa subunit a 1</shortName>
    </recommendedName>
    <alternativeName>
        <fullName>Clathrin-coated vesicle/synaptic vesicle proton pump 116 kDa subunit</fullName>
    </alternativeName>
    <alternativeName>
        <fullName>Vacuolar adenosine triphosphatase subunit Ac116</fullName>
    </alternativeName>
    <alternativeName>
        <fullName>Vacuolar proton pump subunit 1</fullName>
    </alternativeName>
    <alternativeName>
        <fullName>Vacuolar proton translocating ATPase 116 kDa subunit a isoform 1</fullName>
    </alternativeName>
</protein>
<name>VPP1_HUMAN</name>